<protein>
    <recommendedName>
        <fullName evidence="1">ATP synthase subunit b</fullName>
    </recommendedName>
    <alternativeName>
        <fullName evidence="1">ATP synthase F(0) sector subunit b</fullName>
    </alternativeName>
    <alternativeName>
        <fullName evidence="1">ATPase subunit I</fullName>
    </alternativeName>
    <alternativeName>
        <fullName evidence="1">F-type ATPase subunit b</fullName>
        <shortName evidence="1">F-ATPase subunit b</shortName>
    </alternativeName>
</protein>
<proteinExistence type="inferred from homology"/>
<sequence length="173" mass="19539">MTETANLFVLGAAGGVEWGTVIVQVLTFIVLLALLKKFAWGPLKDVMDKRERDINRDIDDAEQAKLNAQKLEEENKQKLKETQEEVQKILEDAKVQARQQQEQIIHEANVRANGMIETAQSEINSQKERAIADINNQVSELSVLIASKVLRKEISEQDQKALVDKYLKEAGDK</sequence>
<dbReference type="EMBL" id="CP000736">
    <property type="protein sequence ID" value="ABR53010.1"/>
    <property type="molecule type" value="Genomic_DNA"/>
</dbReference>
<dbReference type="SMR" id="A6U3J2"/>
<dbReference type="KEGG" id="sah:SaurJH1_2181"/>
<dbReference type="HOGENOM" id="CLU_079215_4_2_9"/>
<dbReference type="GO" id="GO:0005886">
    <property type="term" value="C:plasma membrane"/>
    <property type="evidence" value="ECO:0007669"/>
    <property type="project" value="UniProtKB-SubCell"/>
</dbReference>
<dbReference type="GO" id="GO:0045259">
    <property type="term" value="C:proton-transporting ATP synthase complex"/>
    <property type="evidence" value="ECO:0007669"/>
    <property type="project" value="UniProtKB-KW"/>
</dbReference>
<dbReference type="GO" id="GO:0046933">
    <property type="term" value="F:proton-transporting ATP synthase activity, rotational mechanism"/>
    <property type="evidence" value="ECO:0007669"/>
    <property type="project" value="UniProtKB-UniRule"/>
</dbReference>
<dbReference type="GO" id="GO:0046961">
    <property type="term" value="F:proton-transporting ATPase activity, rotational mechanism"/>
    <property type="evidence" value="ECO:0007669"/>
    <property type="project" value="TreeGrafter"/>
</dbReference>
<dbReference type="CDD" id="cd06503">
    <property type="entry name" value="ATP-synt_Fo_b"/>
    <property type="match status" value="1"/>
</dbReference>
<dbReference type="HAMAP" id="MF_01398">
    <property type="entry name" value="ATP_synth_b_bprime"/>
    <property type="match status" value="1"/>
</dbReference>
<dbReference type="InterPro" id="IPR028987">
    <property type="entry name" value="ATP_synth_B-like_membr_sf"/>
</dbReference>
<dbReference type="InterPro" id="IPR002146">
    <property type="entry name" value="ATP_synth_b/b'su_bac/chlpt"/>
</dbReference>
<dbReference type="InterPro" id="IPR005864">
    <property type="entry name" value="ATP_synth_F0_bsu_bac"/>
</dbReference>
<dbReference type="InterPro" id="IPR050059">
    <property type="entry name" value="ATP_synthase_B_chain"/>
</dbReference>
<dbReference type="NCBIfam" id="TIGR01144">
    <property type="entry name" value="ATP_synt_b"/>
    <property type="match status" value="1"/>
</dbReference>
<dbReference type="NCBIfam" id="NF009987">
    <property type="entry name" value="PRK13453.1"/>
    <property type="match status" value="1"/>
</dbReference>
<dbReference type="PANTHER" id="PTHR33445:SF1">
    <property type="entry name" value="ATP SYNTHASE SUBUNIT B"/>
    <property type="match status" value="1"/>
</dbReference>
<dbReference type="PANTHER" id="PTHR33445">
    <property type="entry name" value="ATP SYNTHASE SUBUNIT B', CHLOROPLASTIC"/>
    <property type="match status" value="1"/>
</dbReference>
<dbReference type="Pfam" id="PF00430">
    <property type="entry name" value="ATP-synt_B"/>
    <property type="match status" value="1"/>
</dbReference>
<dbReference type="SUPFAM" id="SSF81573">
    <property type="entry name" value="F1F0 ATP synthase subunit B, membrane domain"/>
    <property type="match status" value="1"/>
</dbReference>
<gene>
    <name evidence="1" type="primary">atpF</name>
    <name type="ordered locus">SaurJH1_2181</name>
</gene>
<comment type="function">
    <text evidence="1">F(1)F(0) ATP synthase produces ATP from ADP in the presence of a proton or sodium gradient. F-type ATPases consist of two structural domains, F(1) containing the extramembraneous catalytic core and F(0) containing the membrane proton channel, linked together by a central stalk and a peripheral stalk. During catalysis, ATP synthesis in the catalytic domain of F(1) is coupled via a rotary mechanism of the central stalk subunits to proton translocation.</text>
</comment>
<comment type="function">
    <text evidence="1">Component of the F(0) channel, it forms part of the peripheral stalk, linking F(1) to F(0).</text>
</comment>
<comment type="subunit">
    <text evidence="1">F-type ATPases have 2 components, F(1) - the catalytic core - and F(0) - the membrane proton channel. F(1) has five subunits: alpha(3), beta(3), gamma(1), delta(1), epsilon(1). F(0) has three main subunits: a(1), b(2) and c(10-14). The alpha and beta chains form an alternating ring which encloses part of the gamma chain. F(1) is attached to F(0) by a central stalk formed by the gamma and epsilon chains, while a peripheral stalk is formed by the delta and b chains.</text>
</comment>
<comment type="subcellular location">
    <subcellularLocation>
        <location evidence="1">Cell membrane</location>
        <topology evidence="1">Single-pass membrane protein</topology>
    </subcellularLocation>
</comment>
<comment type="similarity">
    <text evidence="1">Belongs to the ATPase B chain family.</text>
</comment>
<evidence type="ECO:0000255" key="1">
    <source>
        <dbReference type="HAMAP-Rule" id="MF_01398"/>
    </source>
</evidence>
<feature type="chain" id="PRO_0000368783" description="ATP synthase subunit b">
    <location>
        <begin position="1"/>
        <end position="173"/>
    </location>
</feature>
<feature type="transmembrane region" description="Helical" evidence="1">
    <location>
        <begin position="15"/>
        <end position="35"/>
    </location>
</feature>
<keyword id="KW-0066">ATP synthesis</keyword>
<keyword id="KW-1003">Cell membrane</keyword>
<keyword id="KW-0138">CF(0)</keyword>
<keyword id="KW-0375">Hydrogen ion transport</keyword>
<keyword id="KW-0406">Ion transport</keyword>
<keyword id="KW-0472">Membrane</keyword>
<keyword id="KW-0812">Transmembrane</keyword>
<keyword id="KW-1133">Transmembrane helix</keyword>
<keyword id="KW-0813">Transport</keyword>
<reference key="1">
    <citation type="submission" date="2007-06" db="EMBL/GenBank/DDBJ databases">
        <title>Complete sequence of chromosome of Staphylococcus aureus subsp. aureus JH1.</title>
        <authorList>
            <consortium name="US DOE Joint Genome Institute"/>
            <person name="Copeland A."/>
            <person name="Lucas S."/>
            <person name="Lapidus A."/>
            <person name="Barry K."/>
            <person name="Detter J.C."/>
            <person name="Glavina del Rio T."/>
            <person name="Hammon N."/>
            <person name="Israni S."/>
            <person name="Dalin E."/>
            <person name="Tice H."/>
            <person name="Pitluck S."/>
            <person name="Chain P."/>
            <person name="Malfatti S."/>
            <person name="Shin M."/>
            <person name="Vergez L."/>
            <person name="Schmutz J."/>
            <person name="Larimer F."/>
            <person name="Land M."/>
            <person name="Hauser L."/>
            <person name="Kyrpides N."/>
            <person name="Ivanova N."/>
            <person name="Tomasz A."/>
            <person name="Richardson P."/>
        </authorList>
    </citation>
    <scope>NUCLEOTIDE SEQUENCE [LARGE SCALE GENOMIC DNA]</scope>
    <source>
        <strain>JH1</strain>
    </source>
</reference>
<accession>A6U3J2</accession>
<name>ATPF_STAA2</name>
<organism>
    <name type="scientific">Staphylococcus aureus (strain JH1)</name>
    <dbReference type="NCBI Taxonomy" id="359787"/>
    <lineage>
        <taxon>Bacteria</taxon>
        <taxon>Bacillati</taxon>
        <taxon>Bacillota</taxon>
        <taxon>Bacilli</taxon>
        <taxon>Bacillales</taxon>
        <taxon>Staphylococcaceae</taxon>
        <taxon>Staphylococcus</taxon>
    </lineage>
</organism>